<protein>
    <recommendedName>
        <fullName evidence="1">Large ribosomal subunit protein uL2</fullName>
    </recommendedName>
    <alternativeName>
        <fullName evidence="3">50S ribosomal protein L2</fullName>
    </alternativeName>
</protein>
<proteinExistence type="inferred from homology"/>
<keyword id="KW-0687">Ribonucleoprotein</keyword>
<keyword id="KW-0689">Ribosomal protein</keyword>
<keyword id="KW-0694">RNA-binding</keyword>
<keyword id="KW-0699">rRNA-binding</keyword>
<organism>
    <name type="scientific">Pseudomonas fluorescens (strain ATCC BAA-477 / NRRL B-23932 / Pf-5)</name>
    <dbReference type="NCBI Taxonomy" id="220664"/>
    <lineage>
        <taxon>Bacteria</taxon>
        <taxon>Pseudomonadati</taxon>
        <taxon>Pseudomonadota</taxon>
        <taxon>Gammaproteobacteria</taxon>
        <taxon>Pseudomonadales</taxon>
        <taxon>Pseudomonadaceae</taxon>
        <taxon>Pseudomonas</taxon>
    </lineage>
</organism>
<sequence>MAIVKCKPTSPGRRFVVKVVNQELHKGAPHAPLLEKKSKSGGRNNNGRITTRHVGGGHKQHYRLVDFRRNDKDGIAATVERIEYDPNRTAHIALLLYADGERRYIIAPKGVSAGDQLIAGALAPIKPGNALQLRNIPVGSTVHGIELKPGKGAQIARSAGASAQLVAREGVYVTLRLRSGEMRKVLAECRATLGEVSNSEHSLRSLGKAGAKRWRGVRPTVRGVAMNPVDHPHGGGEGRTSGGRHPVSPWGFPTKGAKTRGNKRTDKMIVRRRK</sequence>
<feature type="chain" id="PRO_0000237227" description="Large ribosomal subunit protein uL2">
    <location>
        <begin position="1"/>
        <end position="274"/>
    </location>
</feature>
<feature type="region of interest" description="Disordered" evidence="2">
    <location>
        <begin position="28"/>
        <end position="55"/>
    </location>
</feature>
<feature type="region of interest" description="Disordered" evidence="2">
    <location>
        <begin position="224"/>
        <end position="274"/>
    </location>
</feature>
<feature type="compositionally biased region" description="Basic and acidic residues" evidence="2">
    <location>
        <begin position="263"/>
        <end position="274"/>
    </location>
</feature>
<evidence type="ECO:0000255" key="1">
    <source>
        <dbReference type="HAMAP-Rule" id="MF_01320"/>
    </source>
</evidence>
<evidence type="ECO:0000256" key="2">
    <source>
        <dbReference type="SAM" id="MobiDB-lite"/>
    </source>
</evidence>
<evidence type="ECO:0000305" key="3"/>
<name>RL2_PSEF5</name>
<reference key="1">
    <citation type="journal article" date="2005" name="Nat. Biotechnol.">
        <title>Complete genome sequence of the plant commensal Pseudomonas fluorescens Pf-5.</title>
        <authorList>
            <person name="Paulsen I.T."/>
            <person name="Press C.M."/>
            <person name="Ravel J."/>
            <person name="Kobayashi D.Y."/>
            <person name="Myers G.S.A."/>
            <person name="Mavrodi D.V."/>
            <person name="DeBoy R.T."/>
            <person name="Seshadri R."/>
            <person name="Ren Q."/>
            <person name="Madupu R."/>
            <person name="Dodson R.J."/>
            <person name="Durkin A.S."/>
            <person name="Brinkac L.M."/>
            <person name="Daugherty S.C."/>
            <person name="Sullivan S.A."/>
            <person name="Rosovitz M.J."/>
            <person name="Gwinn M.L."/>
            <person name="Zhou L."/>
            <person name="Schneider D.J."/>
            <person name="Cartinhour S.W."/>
            <person name="Nelson W.C."/>
            <person name="Weidman J."/>
            <person name="Watkins K."/>
            <person name="Tran K."/>
            <person name="Khouri H."/>
            <person name="Pierson E.A."/>
            <person name="Pierson L.S. III"/>
            <person name="Thomashow L.S."/>
            <person name="Loper J.E."/>
        </authorList>
    </citation>
    <scope>NUCLEOTIDE SEQUENCE [LARGE SCALE GENOMIC DNA]</scope>
    <source>
        <strain>ATCC BAA-477 / NRRL B-23932 / Pf-5</strain>
    </source>
</reference>
<comment type="function">
    <text evidence="1">One of the primary rRNA binding proteins. Required for association of the 30S and 50S subunits to form the 70S ribosome, for tRNA binding and peptide bond formation. It has been suggested to have peptidyltransferase activity; this is somewhat controversial. Makes several contacts with the 16S rRNA in the 70S ribosome.</text>
</comment>
<comment type="subunit">
    <text evidence="1">Part of the 50S ribosomal subunit. Forms a bridge to the 30S subunit in the 70S ribosome.</text>
</comment>
<comment type="similarity">
    <text evidence="1">Belongs to the universal ribosomal protein uL2 family.</text>
</comment>
<accession>Q4K536</accession>
<gene>
    <name evidence="1" type="primary">rplB</name>
    <name type="ordered locus">PFL_5579</name>
</gene>
<dbReference type="EMBL" id="CP000076">
    <property type="protein sequence ID" value="AAY94784.1"/>
    <property type="molecule type" value="Genomic_DNA"/>
</dbReference>
<dbReference type="RefSeq" id="WP_011063775.1">
    <property type="nucleotide sequence ID" value="NC_004129.6"/>
</dbReference>
<dbReference type="SMR" id="Q4K536"/>
<dbReference type="STRING" id="220664.PFL_5579"/>
<dbReference type="GeneID" id="57478528"/>
<dbReference type="KEGG" id="pfl:PFL_5579"/>
<dbReference type="eggNOG" id="COG0090">
    <property type="taxonomic scope" value="Bacteria"/>
</dbReference>
<dbReference type="HOGENOM" id="CLU_036235_2_1_6"/>
<dbReference type="Proteomes" id="UP000008540">
    <property type="component" value="Chromosome"/>
</dbReference>
<dbReference type="GO" id="GO:0015934">
    <property type="term" value="C:large ribosomal subunit"/>
    <property type="evidence" value="ECO:0007669"/>
    <property type="project" value="InterPro"/>
</dbReference>
<dbReference type="GO" id="GO:0019843">
    <property type="term" value="F:rRNA binding"/>
    <property type="evidence" value="ECO:0007669"/>
    <property type="project" value="UniProtKB-UniRule"/>
</dbReference>
<dbReference type="GO" id="GO:0003735">
    <property type="term" value="F:structural constituent of ribosome"/>
    <property type="evidence" value="ECO:0007669"/>
    <property type="project" value="InterPro"/>
</dbReference>
<dbReference type="GO" id="GO:0016740">
    <property type="term" value="F:transferase activity"/>
    <property type="evidence" value="ECO:0007669"/>
    <property type="project" value="InterPro"/>
</dbReference>
<dbReference type="GO" id="GO:0002181">
    <property type="term" value="P:cytoplasmic translation"/>
    <property type="evidence" value="ECO:0007669"/>
    <property type="project" value="TreeGrafter"/>
</dbReference>
<dbReference type="FunFam" id="2.30.30.30:FF:000001">
    <property type="entry name" value="50S ribosomal protein L2"/>
    <property type="match status" value="1"/>
</dbReference>
<dbReference type="FunFam" id="2.40.50.140:FF:000003">
    <property type="entry name" value="50S ribosomal protein L2"/>
    <property type="match status" value="1"/>
</dbReference>
<dbReference type="FunFam" id="4.10.950.10:FF:000001">
    <property type="entry name" value="50S ribosomal protein L2"/>
    <property type="match status" value="1"/>
</dbReference>
<dbReference type="Gene3D" id="2.30.30.30">
    <property type="match status" value="1"/>
</dbReference>
<dbReference type="Gene3D" id="2.40.50.140">
    <property type="entry name" value="Nucleic acid-binding proteins"/>
    <property type="match status" value="1"/>
</dbReference>
<dbReference type="Gene3D" id="4.10.950.10">
    <property type="entry name" value="Ribosomal protein L2, domain 3"/>
    <property type="match status" value="1"/>
</dbReference>
<dbReference type="HAMAP" id="MF_01320_B">
    <property type="entry name" value="Ribosomal_uL2_B"/>
    <property type="match status" value="1"/>
</dbReference>
<dbReference type="InterPro" id="IPR012340">
    <property type="entry name" value="NA-bd_OB-fold"/>
</dbReference>
<dbReference type="InterPro" id="IPR014722">
    <property type="entry name" value="Rib_uL2_dom2"/>
</dbReference>
<dbReference type="InterPro" id="IPR002171">
    <property type="entry name" value="Ribosomal_uL2"/>
</dbReference>
<dbReference type="InterPro" id="IPR005880">
    <property type="entry name" value="Ribosomal_uL2_bac/org-type"/>
</dbReference>
<dbReference type="InterPro" id="IPR022669">
    <property type="entry name" value="Ribosomal_uL2_C"/>
</dbReference>
<dbReference type="InterPro" id="IPR022671">
    <property type="entry name" value="Ribosomal_uL2_CS"/>
</dbReference>
<dbReference type="InterPro" id="IPR014726">
    <property type="entry name" value="Ribosomal_uL2_dom3"/>
</dbReference>
<dbReference type="InterPro" id="IPR022666">
    <property type="entry name" value="Ribosomal_uL2_RNA-bd_dom"/>
</dbReference>
<dbReference type="InterPro" id="IPR008991">
    <property type="entry name" value="Translation_prot_SH3-like_sf"/>
</dbReference>
<dbReference type="NCBIfam" id="TIGR01171">
    <property type="entry name" value="rplB_bact"/>
    <property type="match status" value="1"/>
</dbReference>
<dbReference type="PANTHER" id="PTHR13691:SF5">
    <property type="entry name" value="LARGE RIBOSOMAL SUBUNIT PROTEIN UL2M"/>
    <property type="match status" value="1"/>
</dbReference>
<dbReference type="PANTHER" id="PTHR13691">
    <property type="entry name" value="RIBOSOMAL PROTEIN L2"/>
    <property type="match status" value="1"/>
</dbReference>
<dbReference type="Pfam" id="PF00181">
    <property type="entry name" value="Ribosomal_L2"/>
    <property type="match status" value="1"/>
</dbReference>
<dbReference type="Pfam" id="PF03947">
    <property type="entry name" value="Ribosomal_L2_C"/>
    <property type="match status" value="1"/>
</dbReference>
<dbReference type="PIRSF" id="PIRSF002158">
    <property type="entry name" value="Ribosomal_L2"/>
    <property type="match status" value="1"/>
</dbReference>
<dbReference type="SMART" id="SM01383">
    <property type="entry name" value="Ribosomal_L2"/>
    <property type="match status" value="1"/>
</dbReference>
<dbReference type="SMART" id="SM01382">
    <property type="entry name" value="Ribosomal_L2_C"/>
    <property type="match status" value="1"/>
</dbReference>
<dbReference type="SUPFAM" id="SSF50249">
    <property type="entry name" value="Nucleic acid-binding proteins"/>
    <property type="match status" value="1"/>
</dbReference>
<dbReference type="SUPFAM" id="SSF50104">
    <property type="entry name" value="Translation proteins SH3-like domain"/>
    <property type="match status" value="1"/>
</dbReference>
<dbReference type="PROSITE" id="PS00467">
    <property type="entry name" value="RIBOSOMAL_L2"/>
    <property type="match status" value="1"/>
</dbReference>